<comment type="function">
    <text evidence="2">Catalyzes the synthesis of citryl-L-2,3-diaminopropionic acid from L-2,3-diaminopropionic acid (L-Dap) and citrate, the first step in staphyloferrin B biosynthesis.</text>
</comment>
<comment type="catalytic activity">
    <reaction evidence="2">
        <text>(S)-2,3-diaminopropanoate + citrate + ATP = 2-[(L-alanin-3-ylcarbamoyl)methyl]-2-hydroxybutanedioate + AMP + diphosphate</text>
        <dbReference type="Rhea" id="RHEA:59124"/>
        <dbReference type="ChEBI" id="CHEBI:16947"/>
        <dbReference type="ChEBI" id="CHEBI:30616"/>
        <dbReference type="ChEBI" id="CHEBI:33019"/>
        <dbReference type="ChEBI" id="CHEBI:57721"/>
        <dbReference type="ChEBI" id="CHEBI:142969"/>
        <dbReference type="ChEBI" id="CHEBI:456215"/>
        <dbReference type="EC" id="6.3.2.54"/>
    </reaction>
    <physiologicalReaction direction="left-to-right" evidence="2">
        <dbReference type="Rhea" id="RHEA:59125"/>
    </physiologicalReaction>
</comment>
<comment type="biophysicochemical properties">
    <kinetics>
        <KM evidence="2">0.99 mM for citrate</KM>
        <text evidence="2">kcat is 16.08 min(-1) with citrate as substrate.</text>
    </kinetics>
</comment>
<comment type="pathway">
    <text evidence="1 2">Siderophore biosynthesis.</text>
</comment>
<comment type="subunit">
    <text evidence="2">Forms a mixture of monomer and dimer in solution.</text>
</comment>
<comment type="induction">
    <text evidence="1">Up-regulated under iron-deficient growth conditions. Repressed by Fur under iron-rich growth conditions.</text>
</comment>
<comment type="disruption phenotype">
    <text evidence="1">Mutant shows a growth defect in iron-deficient medium and is significantly attenuated in a murine kidney abscess model of infection.</text>
</comment>
<comment type="similarity">
    <text evidence="4">Belongs to the IucA/IucC family.</text>
</comment>
<accession>Q2G1M9</accession>
<accession>Q6X7U3</accession>
<proteinExistence type="evidence at protein level"/>
<sequence length="578" mass="65999">MQNKELIQHAAYAAIERILNEYFREENLYQVPPQNHQWSIQLSELETLTGEFRYWSAMGHHMYHPEVWLIDGKSKKITTYKEAIARILQHMAQSADNQTAVQQHMAQIMSDIDNSIHRTARYLQSNTIDYVEDRYIVSEQSLYLGHPFHPTPKSASGFSEADLEKYAPECHTSFQLHYLAVHQDVLLTRYVEGKEDQVEKVLYQLADIDISEIPKDFILLPTHPYQINVLRQHPQYMQYSEQGLIKDLGVSGDSVYPTSSVRTVFSKALNIYLKLPIHVKITNFIRTNDLEQIERTIDAAQVIASVKDEVETPHFKLMFEEGYRALLPNPLGQTVEPEMDLLTNSAMIVREGIPNYHADKDIHVLASLFETMPDSPMSKLSQVIEQSGLAPEAWLECYLNRTLLPILKLFSNTGISLEAHVQNTLIELKDGIPDVCFVRDLEGICLSRTIATEKQLVPNVVAASSPVVYAHDEAWHRLKYYVVVNHLGHLVSTIGKATRNEVVLWQLVAHRLMTWKKEYANNAVFVDCVEDLYQTPTIAAKANLMSKLNDCGANPIYTHIPNPICHNKEVSYCESNNS</sequence>
<feature type="chain" id="PRO_0000447126" description="L-2,3-diaminopropanoate--citrate ligase">
    <location>
        <begin position="1"/>
        <end position="578"/>
    </location>
</feature>
<gene>
    <name evidence="3" type="primary">sbnE</name>
    <name evidence="5" type="ordered locus">SAOUHSC_00079</name>
</gene>
<reference key="1">
    <citation type="journal article" date="2004" name="Infect. Immun.">
        <title>Role of siderophore biosynthesis in virulence of Staphylococcus aureus: identification and characterization of genes involved in production of a siderophore.</title>
        <authorList>
            <person name="Dale S.E."/>
            <person name="Doherty-Kirby A."/>
            <person name="Lajoie G."/>
            <person name="Heinrichs D.E."/>
        </authorList>
    </citation>
    <scope>NUCLEOTIDE SEQUENCE [GENOMIC DNA]</scope>
    <scope>PATHWAY</scope>
    <scope>INDUCTION</scope>
    <scope>DISRUPTION PHENOTYPE</scope>
</reference>
<reference key="2">
    <citation type="book" date="2006" name="Gram positive pathogens, 2nd edition">
        <title>The Staphylococcus aureus NCTC 8325 genome.</title>
        <editorList>
            <person name="Fischetti V."/>
            <person name="Novick R."/>
            <person name="Ferretti J."/>
            <person name="Portnoy D."/>
            <person name="Rood J."/>
        </editorList>
        <authorList>
            <person name="Gillaspy A.F."/>
            <person name="Worrell V."/>
            <person name="Orvis J."/>
            <person name="Roe B.A."/>
            <person name="Dyer D.W."/>
            <person name="Iandolo J.J."/>
        </authorList>
    </citation>
    <scope>NUCLEOTIDE SEQUENCE [LARGE SCALE GENOMIC DNA]</scope>
    <source>
        <strain>NCTC 8325 / PS 47</strain>
    </source>
</reference>
<reference key="3">
    <citation type="journal article" date="2009" name="Mol. Microbiol.">
        <title>Molecular characterization of staphyloferrin B biosynthesis in Staphylococcus aureus.</title>
        <authorList>
            <person name="Cheung J."/>
            <person name="Beasley F.C."/>
            <person name="Liu S."/>
            <person name="Lajoie G.A."/>
            <person name="Heinrichs D.E."/>
        </authorList>
    </citation>
    <scope>FUNCTION</scope>
    <scope>CATALYTIC ACTIVITY</scope>
    <scope>BIOPHYSICOCHEMICAL PROPERTIES</scope>
    <scope>PATHWAY</scope>
    <scope>SUBUNIT</scope>
</reference>
<keyword id="KW-0067">ATP-binding</keyword>
<keyword id="KW-0436">Ligase</keyword>
<keyword id="KW-0547">Nucleotide-binding</keyword>
<keyword id="KW-1185">Reference proteome</keyword>
<name>SBNE_STAA8</name>
<organism>
    <name type="scientific">Staphylococcus aureus (strain NCTC 8325 / PS 47)</name>
    <dbReference type="NCBI Taxonomy" id="93061"/>
    <lineage>
        <taxon>Bacteria</taxon>
        <taxon>Bacillati</taxon>
        <taxon>Bacillota</taxon>
        <taxon>Bacilli</taxon>
        <taxon>Bacillales</taxon>
        <taxon>Staphylococcaceae</taxon>
        <taxon>Staphylococcus</taxon>
    </lineage>
</organism>
<dbReference type="EC" id="6.3.2.54" evidence="2"/>
<dbReference type="EMBL" id="AY251022">
    <property type="protein sequence ID" value="AAP82067.1"/>
    <property type="molecule type" value="Genomic_DNA"/>
</dbReference>
<dbReference type="EMBL" id="CP000253">
    <property type="protein sequence ID" value="ABD29262.1"/>
    <property type="molecule type" value="Genomic_DNA"/>
</dbReference>
<dbReference type="RefSeq" id="WP_001179888.1">
    <property type="nucleotide sequence ID" value="NZ_LS483365.1"/>
</dbReference>
<dbReference type="RefSeq" id="YP_498679.1">
    <property type="nucleotide sequence ID" value="NC_007795.1"/>
</dbReference>
<dbReference type="SMR" id="Q2G1M9"/>
<dbReference type="STRING" id="93061.SAOUHSC_00079"/>
<dbReference type="PaxDb" id="1280-SAXN108_0106"/>
<dbReference type="GeneID" id="3919457"/>
<dbReference type="KEGG" id="sao:SAOUHSC_00079"/>
<dbReference type="PATRIC" id="fig|1280.10758.peg.93"/>
<dbReference type="eggNOG" id="COG4264">
    <property type="taxonomic scope" value="Bacteria"/>
</dbReference>
<dbReference type="HOGENOM" id="CLU_018283_0_0_9"/>
<dbReference type="OrthoDB" id="2989563at2"/>
<dbReference type="BioCyc" id="MetaCyc:G1I0R-73-MONOMER"/>
<dbReference type="BRENDA" id="6.3.2.54">
    <property type="organism ID" value="3352"/>
</dbReference>
<dbReference type="Proteomes" id="UP000008816">
    <property type="component" value="Chromosome"/>
</dbReference>
<dbReference type="GO" id="GO:0016881">
    <property type="term" value="F:acid-amino acid ligase activity"/>
    <property type="evidence" value="ECO:0000314"/>
    <property type="project" value="UniProtKB"/>
</dbReference>
<dbReference type="GO" id="GO:0005524">
    <property type="term" value="F:ATP binding"/>
    <property type="evidence" value="ECO:0007669"/>
    <property type="project" value="UniProtKB-KW"/>
</dbReference>
<dbReference type="GO" id="GO:0019290">
    <property type="term" value="P:siderophore biosynthetic process"/>
    <property type="evidence" value="ECO:0000314"/>
    <property type="project" value="UniProtKB"/>
</dbReference>
<dbReference type="Gene3D" id="1.10.510.40">
    <property type="match status" value="1"/>
</dbReference>
<dbReference type="Gene3D" id="6.10.250.3370">
    <property type="match status" value="1"/>
</dbReference>
<dbReference type="InterPro" id="IPR007310">
    <property type="entry name" value="Aerobactin_biosyn_IucA/IucC_N"/>
</dbReference>
<dbReference type="InterPro" id="IPR022770">
    <property type="entry name" value="IucA/IucC-like_C"/>
</dbReference>
<dbReference type="InterPro" id="IPR037455">
    <property type="entry name" value="LucA/IucC-like"/>
</dbReference>
<dbReference type="PANTHER" id="PTHR34384">
    <property type="entry name" value="L-2,3-DIAMINOPROPANOATE--CITRATE LIGASE"/>
    <property type="match status" value="1"/>
</dbReference>
<dbReference type="PANTHER" id="PTHR34384:SF5">
    <property type="entry name" value="L-2,3-DIAMINOPROPANOATE--CITRATE LIGASE"/>
    <property type="match status" value="1"/>
</dbReference>
<dbReference type="Pfam" id="PF06276">
    <property type="entry name" value="FhuF"/>
    <property type="match status" value="1"/>
</dbReference>
<dbReference type="Pfam" id="PF04183">
    <property type="entry name" value="IucA_IucC"/>
    <property type="match status" value="1"/>
</dbReference>
<protein>
    <recommendedName>
        <fullName evidence="4">L-2,3-diaminopropanoate--citrate ligase</fullName>
        <ecNumber evidence="2">6.3.2.54</ecNumber>
    </recommendedName>
    <alternativeName>
        <fullName evidence="4">Staphyloferrin B biosynthesis protein SbnE</fullName>
    </alternativeName>
</protein>
<evidence type="ECO:0000269" key="1">
    <source>
    </source>
</evidence>
<evidence type="ECO:0000269" key="2">
    <source>
    </source>
</evidence>
<evidence type="ECO:0000303" key="3">
    <source>
    </source>
</evidence>
<evidence type="ECO:0000305" key="4"/>
<evidence type="ECO:0000312" key="5">
    <source>
        <dbReference type="EMBL" id="ABD29262.1"/>
    </source>
</evidence>